<gene>
    <name type="primary">PRR27</name>
    <name type="synonym">C4orf40</name>
</gene>
<sequence>MKLLLWACIVCVAFARKRRFPFIGEDDNDDGHPLHPSLNIPYGIRNLPPPLYYRPVNTVPSYPGNTYTDTGLPSYPWILTSPGFPYVYHIRGFPLATQLNVPPLPPRGFPFVPPSRFFSAAAAPAAPPIAAEPAAAAPLTATPVAAEPAAGAPVAAEPAAEAPVGAEPAAEAPVAAEPAAEAPVGVEPAAEEPSPAEPATAKPAAPEPHPSPSLEQANQ</sequence>
<name>PRR27_HUMAN</name>
<accession>Q6MZM9</accession>
<accession>A8MXP0</accession>
<accession>Q6MZR6</accession>
<protein>
    <recommendedName>
        <fullName>Proline-rich protein 27</fullName>
    </recommendedName>
</protein>
<keyword id="KW-1267">Proteomics identification</keyword>
<keyword id="KW-1185">Reference proteome</keyword>
<keyword id="KW-0964">Secreted</keyword>
<keyword id="KW-0732">Signal</keyword>
<reference key="1">
    <citation type="journal article" date="2007" name="BMC Genomics">
        <title>The full-ORF clone resource of the German cDNA consortium.</title>
        <authorList>
            <person name="Bechtel S."/>
            <person name="Rosenfelder H."/>
            <person name="Duda A."/>
            <person name="Schmidt C.P."/>
            <person name="Ernst U."/>
            <person name="Wellenreuther R."/>
            <person name="Mehrle A."/>
            <person name="Schuster C."/>
            <person name="Bahr A."/>
            <person name="Bloecker H."/>
            <person name="Heubner D."/>
            <person name="Hoerlein A."/>
            <person name="Michel G."/>
            <person name="Wedler H."/>
            <person name="Koehrer K."/>
            <person name="Ottenwaelder B."/>
            <person name="Poustka A."/>
            <person name="Wiemann S."/>
            <person name="Schupp I."/>
        </authorList>
    </citation>
    <scope>NUCLEOTIDE SEQUENCE [LARGE SCALE MRNA]</scope>
    <source>
        <tissue>Salivary gland</tissue>
    </source>
</reference>
<reference key="2">
    <citation type="journal article" date="2005" name="Nature">
        <title>Generation and annotation of the DNA sequences of human chromosomes 2 and 4.</title>
        <authorList>
            <person name="Hillier L.W."/>
            <person name="Graves T.A."/>
            <person name="Fulton R.S."/>
            <person name="Fulton L.A."/>
            <person name="Pepin K.H."/>
            <person name="Minx P."/>
            <person name="Wagner-McPherson C."/>
            <person name="Layman D."/>
            <person name="Wylie K."/>
            <person name="Sekhon M."/>
            <person name="Becker M.C."/>
            <person name="Fewell G.A."/>
            <person name="Delehaunty K.D."/>
            <person name="Miner T.L."/>
            <person name="Nash W.E."/>
            <person name="Kremitzki C."/>
            <person name="Oddy L."/>
            <person name="Du H."/>
            <person name="Sun H."/>
            <person name="Bradshaw-Cordum H."/>
            <person name="Ali J."/>
            <person name="Carter J."/>
            <person name="Cordes M."/>
            <person name="Harris A."/>
            <person name="Isak A."/>
            <person name="van Brunt A."/>
            <person name="Nguyen C."/>
            <person name="Du F."/>
            <person name="Courtney L."/>
            <person name="Kalicki J."/>
            <person name="Ozersky P."/>
            <person name="Abbott S."/>
            <person name="Armstrong J."/>
            <person name="Belter E.A."/>
            <person name="Caruso L."/>
            <person name="Cedroni M."/>
            <person name="Cotton M."/>
            <person name="Davidson T."/>
            <person name="Desai A."/>
            <person name="Elliott G."/>
            <person name="Erb T."/>
            <person name="Fronick C."/>
            <person name="Gaige T."/>
            <person name="Haakenson W."/>
            <person name="Haglund K."/>
            <person name="Holmes A."/>
            <person name="Harkins R."/>
            <person name="Kim K."/>
            <person name="Kruchowski S.S."/>
            <person name="Strong C.M."/>
            <person name="Grewal N."/>
            <person name="Goyea E."/>
            <person name="Hou S."/>
            <person name="Levy A."/>
            <person name="Martinka S."/>
            <person name="Mead K."/>
            <person name="McLellan M.D."/>
            <person name="Meyer R."/>
            <person name="Randall-Maher J."/>
            <person name="Tomlinson C."/>
            <person name="Dauphin-Kohlberg S."/>
            <person name="Kozlowicz-Reilly A."/>
            <person name="Shah N."/>
            <person name="Swearengen-Shahid S."/>
            <person name="Snider J."/>
            <person name="Strong J.T."/>
            <person name="Thompson J."/>
            <person name="Yoakum M."/>
            <person name="Leonard S."/>
            <person name="Pearman C."/>
            <person name="Trani L."/>
            <person name="Radionenko M."/>
            <person name="Waligorski J.E."/>
            <person name="Wang C."/>
            <person name="Rock S.M."/>
            <person name="Tin-Wollam A.-M."/>
            <person name="Maupin R."/>
            <person name="Latreille P."/>
            <person name="Wendl M.C."/>
            <person name="Yang S.-P."/>
            <person name="Pohl C."/>
            <person name="Wallis J.W."/>
            <person name="Spieth J."/>
            <person name="Bieri T.A."/>
            <person name="Berkowicz N."/>
            <person name="Nelson J.O."/>
            <person name="Osborne J."/>
            <person name="Ding L."/>
            <person name="Meyer R."/>
            <person name="Sabo A."/>
            <person name="Shotland Y."/>
            <person name="Sinha P."/>
            <person name="Wohldmann P.E."/>
            <person name="Cook L.L."/>
            <person name="Hickenbotham M.T."/>
            <person name="Eldred J."/>
            <person name="Williams D."/>
            <person name="Jones T.A."/>
            <person name="She X."/>
            <person name="Ciccarelli F.D."/>
            <person name="Izaurralde E."/>
            <person name="Taylor J."/>
            <person name="Schmutz J."/>
            <person name="Myers R.M."/>
            <person name="Cox D.R."/>
            <person name="Huang X."/>
            <person name="McPherson J.D."/>
            <person name="Mardis E.R."/>
            <person name="Clifton S.W."/>
            <person name="Warren W.C."/>
            <person name="Chinwalla A.T."/>
            <person name="Eddy S.R."/>
            <person name="Marra M.A."/>
            <person name="Ovcharenko I."/>
            <person name="Furey T.S."/>
            <person name="Miller W."/>
            <person name="Eichler E.E."/>
            <person name="Bork P."/>
            <person name="Suyama M."/>
            <person name="Torrents D."/>
            <person name="Waterston R.H."/>
            <person name="Wilson R.K."/>
        </authorList>
    </citation>
    <scope>NUCLEOTIDE SEQUENCE [LARGE SCALE GENOMIC DNA]</scope>
</reference>
<organism>
    <name type="scientific">Homo sapiens</name>
    <name type="common">Human</name>
    <dbReference type="NCBI Taxonomy" id="9606"/>
    <lineage>
        <taxon>Eukaryota</taxon>
        <taxon>Metazoa</taxon>
        <taxon>Chordata</taxon>
        <taxon>Craniata</taxon>
        <taxon>Vertebrata</taxon>
        <taxon>Euteleostomi</taxon>
        <taxon>Mammalia</taxon>
        <taxon>Eutheria</taxon>
        <taxon>Euarchontoglires</taxon>
        <taxon>Primates</taxon>
        <taxon>Haplorrhini</taxon>
        <taxon>Catarrhini</taxon>
        <taxon>Hominidae</taxon>
        <taxon>Homo</taxon>
    </lineage>
</organism>
<proteinExistence type="evidence at protein level"/>
<dbReference type="EMBL" id="BX640924">
    <property type="protein sequence ID" value="CAE45962.1"/>
    <property type="molecule type" value="mRNA"/>
</dbReference>
<dbReference type="EMBL" id="BX640997">
    <property type="protein sequence ID" value="CAE46000.1"/>
    <property type="molecule type" value="mRNA"/>
</dbReference>
<dbReference type="EMBL" id="BX640892">
    <property type="protein sequence ID" value="CAH56124.1"/>
    <property type="molecule type" value="mRNA"/>
</dbReference>
<dbReference type="EMBL" id="BX648724">
    <property type="protein sequence ID" value="CAH56126.1"/>
    <property type="molecule type" value="mRNA"/>
</dbReference>
<dbReference type="EMBL" id="AC104811">
    <property type="status" value="NOT_ANNOTATED_CDS"/>
    <property type="molecule type" value="Genomic_DNA"/>
</dbReference>
<dbReference type="CCDS" id="CCDS3535.1"/>
<dbReference type="RefSeq" id="NP_999876.2">
    <property type="nucleotide sequence ID" value="NM_214711.4"/>
</dbReference>
<dbReference type="BioGRID" id="134945">
    <property type="interactions" value="17"/>
</dbReference>
<dbReference type="FunCoup" id="Q6MZM9">
    <property type="interactions" value="7"/>
</dbReference>
<dbReference type="IntAct" id="Q6MZM9">
    <property type="interactions" value="17"/>
</dbReference>
<dbReference type="STRING" id="9606.ENSP00000343172"/>
<dbReference type="BioMuta" id="PRR27"/>
<dbReference type="jPOST" id="Q6MZM9"/>
<dbReference type="MassIVE" id="Q6MZM9"/>
<dbReference type="PaxDb" id="9606-ENSP00000343172"/>
<dbReference type="PeptideAtlas" id="Q6MZM9"/>
<dbReference type="ProteomicsDB" id="66574"/>
<dbReference type="Antibodypedia" id="50084">
    <property type="antibodies" value="26 antibodies from 6 providers"/>
</dbReference>
<dbReference type="DNASU" id="401137"/>
<dbReference type="Ensembl" id="ENST00000344526.10">
    <property type="protein sequence ID" value="ENSP00000343172.5"/>
    <property type="gene ID" value="ENSG00000187533.14"/>
</dbReference>
<dbReference type="Ensembl" id="ENST00000502294.5">
    <property type="protein sequence ID" value="ENSP00000426249.1"/>
    <property type="gene ID" value="ENSG00000187533.14"/>
</dbReference>
<dbReference type="Ensembl" id="ENST00000634325.2">
    <property type="protein sequence ID" value="ENSP00000489399.1"/>
    <property type="gene ID" value="ENSG00000282868.2"/>
</dbReference>
<dbReference type="Ensembl" id="ENST00000634530.1">
    <property type="protein sequence ID" value="ENSP00000489097.1"/>
    <property type="gene ID" value="ENSG00000282868.2"/>
</dbReference>
<dbReference type="GeneID" id="401137"/>
<dbReference type="KEGG" id="hsa:401137"/>
<dbReference type="MANE-Select" id="ENST00000344526.10">
    <property type="protein sequence ID" value="ENSP00000343172.5"/>
    <property type="RefSeq nucleotide sequence ID" value="NM_214711.4"/>
    <property type="RefSeq protein sequence ID" value="NP_999876.2"/>
</dbReference>
<dbReference type="UCSC" id="uc003hfa.5">
    <property type="organism name" value="human"/>
</dbReference>
<dbReference type="AGR" id="HGNC:33193"/>
<dbReference type="CTD" id="401137"/>
<dbReference type="GeneCards" id="PRR27"/>
<dbReference type="HGNC" id="HGNC:33193">
    <property type="gene designation" value="PRR27"/>
</dbReference>
<dbReference type="HPA" id="ENSG00000187533">
    <property type="expression patterns" value="Tissue enriched (salivary)"/>
</dbReference>
<dbReference type="neXtProt" id="NX_Q6MZM9"/>
<dbReference type="OpenTargets" id="ENSG00000187533"/>
<dbReference type="PharmGKB" id="PA162379834"/>
<dbReference type="VEuPathDB" id="HostDB:ENSG00000187533"/>
<dbReference type="eggNOG" id="ENOG502SCUZ">
    <property type="taxonomic scope" value="Eukaryota"/>
</dbReference>
<dbReference type="GeneTree" id="ENSGT00530000064615"/>
<dbReference type="HOGENOM" id="CLU_111396_0_0_1"/>
<dbReference type="InParanoid" id="Q6MZM9"/>
<dbReference type="OMA" id="PPRDFPF"/>
<dbReference type="OrthoDB" id="9540201at2759"/>
<dbReference type="PAN-GO" id="Q6MZM9">
    <property type="GO annotations" value="0 GO annotations based on evolutionary models"/>
</dbReference>
<dbReference type="PhylomeDB" id="Q6MZM9"/>
<dbReference type="TreeFam" id="TF338159"/>
<dbReference type="PathwayCommons" id="Q6MZM9"/>
<dbReference type="BioGRID-ORCS" id="401137">
    <property type="hits" value="7 hits in 1131 CRISPR screens"/>
</dbReference>
<dbReference type="ChiTaRS" id="PRR27">
    <property type="organism name" value="human"/>
</dbReference>
<dbReference type="GenomeRNAi" id="401137"/>
<dbReference type="Pharos" id="Q6MZM9">
    <property type="development level" value="Tdark"/>
</dbReference>
<dbReference type="PRO" id="PR:Q6MZM9"/>
<dbReference type="Proteomes" id="UP000005640">
    <property type="component" value="Chromosome 4"/>
</dbReference>
<dbReference type="RNAct" id="Q6MZM9">
    <property type="molecule type" value="protein"/>
</dbReference>
<dbReference type="Bgee" id="ENSG00000187533">
    <property type="expression patterns" value="Expressed in male germ line stem cell (sensu Vertebrata) in testis and 20 other cell types or tissues"/>
</dbReference>
<dbReference type="ExpressionAtlas" id="Q6MZM9">
    <property type="expression patterns" value="baseline and differential"/>
</dbReference>
<dbReference type="GO" id="GO:0070062">
    <property type="term" value="C:extracellular exosome"/>
    <property type="evidence" value="ECO:0007005"/>
    <property type="project" value="UniProtKB"/>
</dbReference>
<dbReference type="InterPro" id="IPR033533">
    <property type="entry name" value="PRR27"/>
</dbReference>
<dbReference type="PANTHER" id="PTHR39415">
    <property type="entry name" value="PROLINE-RICH PROTEIN 27"/>
    <property type="match status" value="1"/>
</dbReference>
<dbReference type="PANTHER" id="PTHR39415:SF1">
    <property type="entry name" value="PROLINE-RICH PROTEIN 27"/>
    <property type="match status" value="1"/>
</dbReference>
<comment type="subcellular location">
    <subcellularLocation>
        <location evidence="3">Secreted</location>
    </subcellularLocation>
</comment>
<evidence type="ECO:0000255" key="1"/>
<evidence type="ECO:0000256" key="2">
    <source>
        <dbReference type="SAM" id="MobiDB-lite"/>
    </source>
</evidence>
<evidence type="ECO:0000305" key="3"/>
<feature type="signal peptide" evidence="1">
    <location>
        <begin position="1"/>
        <end position="15"/>
    </location>
</feature>
<feature type="chain" id="PRO_0000339182" description="Proline-rich protein 27">
    <location>
        <begin position="16"/>
        <end position="219"/>
    </location>
</feature>
<feature type="region of interest" description="Disordered" evidence="2">
    <location>
        <begin position="155"/>
        <end position="219"/>
    </location>
</feature>
<feature type="compositionally biased region" description="Low complexity" evidence="2">
    <location>
        <begin position="155"/>
        <end position="204"/>
    </location>
</feature>
<feature type="sequence variant" id="VAR_043927" description="In dbSNP:rs1612460.">
    <original>I</original>
    <variation>L</variation>
    <location>
        <position position="44"/>
    </location>
</feature>
<feature type="sequence variant" id="VAR_043928" description="In dbSNP:rs1613461.">
    <original>R</original>
    <variation>C</variation>
    <location>
        <position position="91"/>
    </location>
</feature>
<feature type="sequence conflict" description="In Ref. 1; CAE45962." evidence="3" ref="1">
    <original>I</original>
    <variation>V</variation>
    <location>
        <position position="44"/>
    </location>
</feature>